<name>TX1A_THRSX</name>
<reference key="1">
    <citation type="journal article" date="2021" name="ACS Pharmacol. Transl. Sci.">
        <title>Pharmacological inhibition of the voltage-gated sodium channel NaV1.7 alleviates chronic visceral pain in a rodent model of irritable bowel syndrome.</title>
        <authorList>
            <person name="Jiang Y."/>
            <person name="Castro J."/>
            <person name="Blomster L.V."/>
            <person name="Agwa A.J."/>
            <person name="Maddern J."/>
            <person name="Schober G."/>
            <person name="Herzig V."/>
            <person name="Chow C.Y."/>
            <person name="Cardoso F.C."/>
            <person name="Demetrio De Souza Franca P."/>
            <person name="Gonzales J."/>
            <person name="Schroeder C.I."/>
            <person name="Esche S."/>
            <person name="Reiner T."/>
            <person name="Brierley S.M."/>
            <person name="King G.F."/>
        </authorList>
    </citation>
    <scope>PROTEIN SEQUENCE</scope>
    <scope>STRUCTURE BY NMR</scope>
    <scope>FUNCTION</scope>
    <scope>AMIDATION AT ASN-28</scope>
    <scope>SUBCELLULAR LOCATION</scope>
    <scope>MASS SPECTROMETRY</scope>
    <scope>DISULFIDE BONDS</scope>
    <scope>SYNTHESIS</scope>
    <scope>RECOMBINANT EXPRESSION OF NON-AMIDATED PEPTIDE</scope>
    <source>
        <strain>Peru</strain>
        <tissue>Venom</tissue>
    </source>
</reference>
<organism>
    <name type="scientific">Thrixopelma sp.</name>
    <name type="common">South American tarantula</name>
    <dbReference type="NCBI Taxonomy" id="3056146"/>
    <lineage>
        <taxon>Eukaryota</taxon>
        <taxon>Metazoa</taxon>
        <taxon>Ecdysozoa</taxon>
        <taxon>Arthropoda</taxon>
        <taxon>Chelicerata</taxon>
        <taxon>Arachnida</taxon>
        <taxon>Araneae</taxon>
        <taxon>Mygalomorphae</taxon>
        <taxon>Theraphosidae</taxon>
        <taxon>Thrixopelma</taxon>
    </lineage>
</organism>
<comment type="function">
    <text evidence="1">Gating-modifier toxin that potently inhibits Nav1.7/SCN9A (IC(50)=10.3 nM), Nav1.2/SCN8A (IC(50)=245 nM), and Nav1.1/SCN1A (IC(50)=452 nM). Acts by stabilizing the inactivated state of the channel (tested on Nav1.7) by likely targeting voltage-sensing domain IV, leading to a hyperpolarizing shift in the voltage-dependence of channel inactivation and slowing recovery from fast inactivation. Does not alter the voltage dependence of activation. In vivo, intracolonic administration of this peptide completely reverses chronic visceral hypersensitivity in a mouse model of irritable bowel syndrome. Is highly stable in human serum and simulated gastric fluid.</text>
</comment>
<comment type="subcellular location">
    <subcellularLocation>
        <location evidence="1">Secreted</location>
    </subcellularLocation>
</comment>
<comment type="tissue specificity">
    <text evidence="4">Expressed by the venom gland.</text>
</comment>
<comment type="domain">
    <text evidence="1">The presence of a 'disulfide through disulfide knot' structurally defines this protein as a knottin.</text>
</comment>
<comment type="mass spectrometry">
    <text>Monoisotopic mass.</text>
</comment>
<comment type="miscellaneous">
    <text evidence="1">Negative results: shows weak activity against Nav1.3/SCN3A, Nav1.4/SCN4A, Nav1.5/SCN5A, Nav1.6/SCN8A, and Nav1.8/SCN10A.</text>
</comment>
<comment type="similarity">
    <text evidence="3">Belongs to the neurotoxin 30 (phrixotoxin) family.</text>
</comment>
<sequence>YCQKFLWTCDSERPCCEGLVCRLWCKIN</sequence>
<proteinExistence type="evidence at protein level"/>
<dbReference type="PDB" id="7A64">
    <property type="method" value="NMR"/>
    <property type="chains" value="A=1-28"/>
</dbReference>
<dbReference type="PDBsum" id="7A64"/>
<keyword id="KW-0002">3D-structure</keyword>
<keyword id="KW-0027">Amidation</keyword>
<keyword id="KW-0903">Direct protein sequencing</keyword>
<keyword id="KW-1015">Disulfide bond</keyword>
<keyword id="KW-0872">Ion channel impairing toxin</keyword>
<keyword id="KW-0964">Secreted</keyword>
<keyword id="KW-0800">Toxin</keyword>
<keyword id="KW-0738">Voltage-gated sodium channel impairing toxin</keyword>
<evidence type="ECO:0000269" key="1">
    <source>
    </source>
</evidence>
<evidence type="ECO:0000303" key="2">
    <source>
    </source>
</evidence>
<evidence type="ECO:0000305" key="3"/>
<evidence type="ECO:0000305" key="4">
    <source>
    </source>
</evidence>
<evidence type="ECO:0007744" key="5">
    <source>
        <dbReference type="PDB" id="7A64"/>
    </source>
</evidence>
<feature type="peptide" id="PRO_0000462459" description="Mu-theraphotoxin-Tsp1a" evidence="1">
    <location>
        <begin position="1"/>
        <end position="28"/>
    </location>
</feature>
<feature type="modified residue" description="Asparagine amide" evidence="1">
    <location>
        <position position="28"/>
    </location>
</feature>
<feature type="disulfide bond" evidence="1 5">
    <location>
        <begin position="2"/>
        <end position="16"/>
    </location>
</feature>
<feature type="disulfide bond" evidence="1 5">
    <location>
        <begin position="9"/>
        <end position="21"/>
    </location>
</feature>
<feature type="disulfide bond" evidence="1 5">
    <location>
        <begin position="15"/>
        <end position="25"/>
    </location>
</feature>
<protein>
    <recommendedName>
        <fullName evidence="2">Mu-theraphotoxin-Tsp1a</fullName>
        <shortName evidence="2">Mu-TXTR-Tsp1a</shortName>
    </recommendedName>
</protein>
<accession>P0DRJ3</accession>